<keyword id="KW-0963">Cytoplasm</keyword>
<keyword id="KW-0238">DNA-binding</keyword>
<keyword id="KW-1185">Reference proteome</keyword>
<keyword id="KW-0804">Transcription</keyword>
<keyword id="KW-0805">Transcription regulation</keyword>
<organism>
    <name type="scientific">Acidobacterium capsulatum (strain ATCC 51196 / DSM 11244 / BCRC 80197 / JCM 7670 / NBRC 15755 / NCIMB 13165 / 161)</name>
    <dbReference type="NCBI Taxonomy" id="240015"/>
    <lineage>
        <taxon>Bacteria</taxon>
        <taxon>Pseudomonadati</taxon>
        <taxon>Acidobacteriota</taxon>
        <taxon>Terriglobia</taxon>
        <taxon>Terriglobales</taxon>
        <taxon>Acidobacteriaceae</taxon>
        <taxon>Acidobacterium</taxon>
    </lineage>
</organism>
<reference key="1">
    <citation type="journal article" date="2009" name="Appl. Environ. Microbiol.">
        <title>Three genomes from the phylum Acidobacteria provide insight into the lifestyles of these microorganisms in soils.</title>
        <authorList>
            <person name="Ward N.L."/>
            <person name="Challacombe J.F."/>
            <person name="Janssen P.H."/>
            <person name="Henrissat B."/>
            <person name="Coutinho P.M."/>
            <person name="Wu M."/>
            <person name="Xie G."/>
            <person name="Haft D.H."/>
            <person name="Sait M."/>
            <person name="Badger J."/>
            <person name="Barabote R.D."/>
            <person name="Bradley B."/>
            <person name="Brettin T.S."/>
            <person name="Brinkac L.M."/>
            <person name="Bruce D."/>
            <person name="Creasy T."/>
            <person name="Daugherty S.C."/>
            <person name="Davidsen T.M."/>
            <person name="DeBoy R.T."/>
            <person name="Detter J.C."/>
            <person name="Dodson R.J."/>
            <person name="Durkin A.S."/>
            <person name="Ganapathy A."/>
            <person name="Gwinn-Giglio M."/>
            <person name="Han C.S."/>
            <person name="Khouri H."/>
            <person name="Kiss H."/>
            <person name="Kothari S.P."/>
            <person name="Madupu R."/>
            <person name="Nelson K.E."/>
            <person name="Nelson W.C."/>
            <person name="Paulsen I."/>
            <person name="Penn K."/>
            <person name="Ren Q."/>
            <person name="Rosovitz M.J."/>
            <person name="Selengut J.D."/>
            <person name="Shrivastava S."/>
            <person name="Sullivan S.A."/>
            <person name="Tapia R."/>
            <person name="Thompson L.S."/>
            <person name="Watkins K.L."/>
            <person name="Yang Q."/>
            <person name="Yu C."/>
            <person name="Zafar N."/>
            <person name="Zhou L."/>
            <person name="Kuske C.R."/>
        </authorList>
    </citation>
    <scope>NUCLEOTIDE SEQUENCE [LARGE SCALE GENOMIC DNA]</scope>
    <source>
        <strain>ATCC 51196 / DSM 11244 / BCRC 80197 / JCM 7670 / NBRC 15755 / NCIMB 13165 / 161</strain>
    </source>
</reference>
<proteinExistence type="inferred from homology"/>
<protein>
    <recommendedName>
        <fullName evidence="1">Probable transcriptional regulatory protein ACP_0521</fullName>
    </recommendedName>
</protein>
<gene>
    <name type="ordered locus">ACP_0521</name>
</gene>
<sequence>MSGHSKWATIKHKKGALDAKRGKIFTRLIKEITISARAGGDPDGNPRLRTAIAAAKAENMPQDNIKRAIQRGTGELPGAVYEEITFEGYGPGGVAVIVEATTDNRNRAVSEIRHAFSKNGGNLGEPNSVRFMFQKKGLIVVSKDAADEEKLMNIVLEAGGDDLNGEGENWEILTEPQAYDAVVQAVRDAGIEPQVAEVTMIASTYTKLEGATANQMMRLLETLEDHDDVQNVYSNFDMEQVEEVAG</sequence>
<name>Y521_ACIC5</name>
<feature type="chain" id="PRO_1000200069" description="Probable transcriptional regulatory protein ACP_0521">
    <location>
        <begin position="1"/>
        <end position="246"/>
    </location>
</feature>
<evidence type="ECO:0000255" key="1">
    <source>
        <dbReference type="HAMAP-Rule" id="MF_00693"/>
    </source>
</evidence>
<comment type="subcellular location">
    <subcellularLocation>
        <location evidence="1">Cytoplasm</location>
    </subcellularLocation>
</comment>
<comment type="similarity">
    <text evidence="1">Belongs to the TACO1 family.</text>
</comment>
<dbReference type="EMBL" id="CP001472">
    <property type="protein sequence ID" value="ACO33449.1"/>
    <property type="molecule type" value="Genomic_DNA"/>
</dbReference>
<dbReference type="RefSeq" id="WP_012680912.1">
    <property type="nucleotide sequence ID" value="NC_012483.1"/>
</dbReference>
<dbReference type="SMR" id="C1F121"/>
<dbReference type="FunCoup" id="C1F121">
    <property type="interactions" value="538"/>
</dbReference>
<dbReference type="STRING" id="240015.ACP_0521"/>
<dbReference type="KEGG" id="aca:ACP_0521"/>
<dbReference type="eggNOG" id="COG0217">
    <property type="taxonomic scope" value="Bacteria"/>
</dbReference>
<dbReference type="HOGENOM" id="CLU_062974_2_2_0"/>
<dbReference type="InParanoid" id="C1F121"/>
<dbReference type="OrthoDB" id="9781053at2"/>
<dbReference type="Proteomes" id="UP000002207">
    <property type="component" value="Chromosome"/>
</dbReference>
<dbReference type="GO" id="GO:0005829">
    <property type="term" value="C:cytosol"/>
    <property type="evidence" value="ECO:0007669"/>
    <property type="project" value="TreeGrafter"/>
</dbReference>
<dbReference type="GO" id="GO:0003677">
    <property type="term" value="F:DNA binding"/>
    <property type="evidence" value="ECO:0007669"/>
    <property type="project" value="UniProtKB-UniRule"/>
</dbReference>
<dbReference type="GO" id="GO:0006355">
    <property type="term" value="P:regulation of DNA-templated transcription"/>
    <property type="evidence" value="ECO:0007669"/>
    <property type="project" value="UniProtKB-UniRule"/>
</dbReference>
<dbReference type="FunFam" id="1.10.10.200:FF:000002">
    <property type="entry name" value="Probable transcriptional regulatory protein CLM62_37755"/>
    <property type="match status" value="1"/>
</dbReference>
<dbReference type="Gene3D" id="1.10.10.200">
    <property type="match status" value="1"/>
</dbReference>
<dbReference type="Gene3D" id="3.30.70.980">
    <property type="match status" value="2"/>
</dbReference>
<dbReference type="HAMAP" id="MF_00693">
    <property type="entry name" value="Transcrip_reg_TACO1"/>
    <property type="match status" value="1"/>
</dbReference>
<dbReference type="InterPro" id="IPR017856">
    <property type="entry name" value="Integrase-like_N"/>
</dbReference>
<dbReference type="InterPro" id="IPR048300">
    <property type="entry name" value="TACO1_YebC-like_2nd/3rd_dom"/>
</dbReference>
<dbReference type="InterPro" id="IPR049083">
    <property type="entry name" value="TACO1_YebC_N"/>
</dbReference>
<dbReference type="InterPro" id="IPR002876">
    <property type="entry name" value="Transcrip_reg_TACO1-like"/>
</dbReference>
<dbReference type="InterPro" id="IPR026564">
    <property type="entry name" value="Transcrip_reg_TACO1-like_dom3"/>
</dbReference>
<dbReference type="InterPro" id="IPR029072">
    <property type="entry name" value="YebC-like"/>
</dbReference>
<dbReference type="NCBIfam" id="NF001030">
    <property type="entry name" value="PRK00110.1"/>
    <property type="match status" value="1"/>
</dbReference>
<dbReference type="NCBIfam" id="NF009044">
    <property type="entry name" value="PRK12378.1"/>
    <property type="match status" value="1"/>
</dbReference>
<dbReference type="NCBIfam" id="TIGR01033">
    <property type="entry name" value="YebC/PmpR family DNA-binding transcriptional regulator"/>
    <property type="match status" value="1"/>
</dbReference>
<dbReference type="PANTHER" id="PTHR12532:SF6">
    <property type="entry name" value="TRANSCRIPTIONAL REGULATORY PROTEIN YEBC-RELATED"/>
    <property type="match status" value="1"/>
</dbReference>
<dbReference type="PANTHER" id="PTHR12532">
    <property type="entry name" value="TRANSLATIONAL ACTIVATOR OF CYTOCHROME C OXIDASE 1"/>
    <property type="match status" value="1"/>
</dbReference>
<dbReference type="Pfam" id="PF20772">
    <property type="entry name" value="TACO1_YebC_N"/>
    <property type="match status" value="1"/>
</dbReference>
<dbReference type="Pfam" id="PF01709">
    <property type="entry name" value="Transcrip_reg"/>
    <property type="match status" value="1"/>
</dbReference>
<dbReference type="SUPFAM" id="SSF75625">
    <property type="entry name" value="YebC-like"/>
    <property type="match status" value="1"/>
</dbReference>
<accession>C1F121</accession>